<protein>
    <recommendedName>
        <fullName evidence="4">NAD(+)--arginine ADP-ribosyltransferase Lart1</fullName>
        <ecNumber evidence="2">2.4.2.31</ecNumber>
    </recommendedName>
    <alternativeName>
        <fullName evidence="3">Legionella ADP-ribosyltransferase 1</fullName>
        <shortName evidence="3">Legionella ART 1</shortName>
    </alternativeName>
    <alternativeName>
        <fullName evidence="3">Mono-ADP-ribosyltransferase</fullName>
        <shortName evidence="3">Mono-ART</shortName>
        <shortName evidence="3">mART</shortName>
    </alternativeName>
</protein>
<feature type="chain" id="PRO_0000453644" description="NAD(+)--arginine ADP-ribosyltransferase Lart1">
    <location>
        <begin position="1"/>
        <end position="303"/>
    </location>
</feature>
<feature type="mutagenesis site" description="Loss of activity." evidence="2">
    <original>E</original>
    <variation>A</variation>
    <location>
        <position position="137"/>
    </location>
</feature>
<name>LART1_LEGPH</name>
<gene>
    <name evidence="3" type="primary">Lart1</name>
    <name evidence="5" type="ordered locus">lpg0181</name>
</gene>
<sequence>MYSKYPAFFLNKNIKSSSGVQFSNVVKIPSAIESLYRGDNNLTGIIFLLPTLITGVFCQNFPEVVDIEQIRLHKLTNLSNDFHMVSMSEDPQIALDWGNGCFITIDPVSFSDYIVDVHATFSENQLNLPGRMEREKEHVALAVPFCSIKKITIHNKELANPFYLSIPQENHEAKMELNTLYGELISLLRKKYTQEVDEKEEQIALRTYAIRYLDFYAKFCGCDNPFDKTIAQLSELYPEFMSNFLQSSHFSSKTGLMKEIVVNSLDNLFKEHPYTKSIDASYIYRVKESTTCYEDDWAKPVYD</sequence>
<dbReference type="EC" id="2.4.2.31" evidence="2"/>
<dbReference type="EMBL" id="AE017354">
    <property type="protein sequence ID" value="AAU26288.1"/>
    <property type="molecule type" value="Genomic_DNA"/>
</dbReference>
<dbReference type="RefSeq" id="WP_010945942.1">
    <property type="nucleotide sequence ID" value="NC_002942.5"/>
</dbReference>
<dbReference type="RefSeq" id="YP_094235.1">
    <property type="nucleotide sequence ID" value="NC_002942.5"/>
</dbReference>
<dbReference type="SMR" id="Q5ZZ30"/>
<dbReference type="PaxDb" id="272624-lpg0181"/>
<dbReference type="KEGG" id="lpn:lpg0181"/>
<dbReference type="PATRIC" id="fig|272624.6.peg.194"/>
<dbReference type="eggNOG" id="ENOG5030R09">
    <property type="taxonomic scope" value="Bacteria"/>
</dbReference>
<dbReference type="HOGENOM" id="CLU_917625_0_0_6"/>
<dbReference type="OrthoDB" id="5643019at2"/>
<dbReference type="Proteomes" id="UP000000609">
    <property type="component" value="Chromosome"/>
</dbReference>
<dbReference type="GO" id="GO:0005576">
    <property type="term" value="C:extracellular region"/>
    <property type="evidence" value="ECO:0007669"/>
    <property type="project" value="UniProtKB-SubCell"/>
</dbReference>
<dbReference type="GO" id="GO:0016757">
    <property type="term" value="F:glycosyltransferase activity"/>
    <property type="evidence" value="ECO:0007669"/>
    <property type="project" value="UniProtKB-KW"/>
</dbReference>
<dbReference type="GO" id="GO:0016779">
    <property type="term" value="F:nucleotidyltransferase activity"/>
    <property type="evidence" value="ECO:0007669"/>
    <property type="project" value="UniProtKB-KW"/>
</dbReference>
<keyword id="KW-0328">Glycosyltransferase</keyword>
<keyword id="KW-0520">NAD</keyword>
<keyword id="KW-0548">Nucleotidyltransferase</keyword>
<keyword id="KW-1185">Reference proteome</keyword>
<keyword id="KW-0964">Secreted</keyword>
<keyword id="KW-0808">Transferase</keyword>
<keyword id="KW-0843">Virulence</keyword>
<comment type="function">
    <text evidence="2">ADP-ribosyltransferase that targets a specific class of NAD(+)-dependent glutamate dehydrogenase (GDH) enzymes found in fungi and protists, including many natural hosts of Legionella. Acts by targeting a conserved arginine residue in the NAD(+)-binding pocket of GDH, thereby blocking oxidative deamination of glutamate. Lart1 may target amoeba GDH to prevent a conserved stress response. In vitro, acts on Glud2 from the amoeba Dictyostelium discoideum (DdGluD2) and yeast Gdh2p but does not act on human or Legionella GDH homologs.</text>
</comment>
<comment type="catalytic activity">
    <reaction evidence="2">
        <text>L-arginyl-[protein] + NAD(+) = N(omega)-(ADP-D-ribosyl)-L-arginyl-[protein] + nicotinamide + H(+)</text>
        <dbReference type="Rhea" id="RHEA:19149"/>
        <dbReference type="Rhea" id="RHEA-COMP:10532"/>
        <dbReference type="Rhea" id="RHEA-COMP:15087"/>
        <dbReference type="ChEBI" id="CHEBI:15378"/>
        <dbReference type="ChEBI" id="CHEBI:17154"/>
        <dbReference type="ChEBI" id="CHEBI:29965"/>
        <dbReference type="ChEBI" id="CHEBI:57540"/>
        <dbReference type="ChEBI" id="CHEBI:142554"/>
        <dbReference type="EC" id="2.4.2.31"/>
    </reaction>
</comment>
<comment type="biophysicochemical properties">
    <kinetics>
        <KM evidence="2">2.22 uM for DdGluD2</KM>
        <KM evidence="2">1.57 uM for NAD(+)</KM>
        <text evidence="2">kcat is 0.11 min(-1) with DdGluD2 as substrate. kcat is 0.15 min(-1) with NAD(+) as substrate.</text>
    </kinetics>
    <phDependence>
        <text evidence="2">Optimum pH is 6.0.</text>
    </phDependence>
</comment>
<comment type="subcellular location">
    <subcellularLocation>
        <location evidence="1">Secreted</location>
    </subcellularLocation>
    <text evidence="1">Translocated into the host cell via the type IV secretion system (T4SS).</text>
</comment>
<comment type="disruption phenotype">
    <text evidence="2">Deletion of the gene has no effect on bacterial replication in the amoeba A.castellani.</text>
</comment>
<proteinExistence type="evidence at protein level"/>
<accession>Q5ZZ30</accession>
<evidence type="ECO:0000269" key="1">
    <source>
    </source>
</evidence>
<evidence type="ECO:0000269" key="2">
    <source>
    </source>
</evidence>
<evidence type="ECO:0000303" key="3">
    <source>
    </source>
</evidence>
<evidence type="ECO:0000305" key="4"/>
<evidence type="ECO:0000312" key="5">
    <source>
        <dbReference type="EMBL" id="AAU26288.1"/>
    </source>
</evidence>
<reference key="1">
    <citation type="journal article" date="2004" name="Science">
        <title>The genomic sequence of the accidental pathogen Legionella pneumophila.</title>
        <authorList>
            <person name="Chien M."/>
            <person name="Morozova I."/>
            <person name="Shi S."/>
            <person name="Sheng H."/>
            <person name="Chen J."/>
            <person name="Gomez S.M."/>
            <person name="Asamani G."/>
            <person name="Hill K."/>
            <person name="Nuara J."/>
            <person name="Feder M."/>
            <person name="Rineer J."/>
            <person name="Greenberg J.J."/>
            <person name="Steshenko V."/>
            <person name="Park S.H."/>
            <person name="Zhao B."/>
            <person name="Teplitskaya E."/>
            <person name="Edwards J.R."/>
            <person name="Pampou S."/>
            <person name="Georghiou A."/>
            <person name="Chou I.-C."/>
            <person name="Iannuccilli W."/>
            <person name="Ulz M.E."/>
            <person name="Kim D.H."/>
            <person name="Geringer-Sameth A."/>
            <person name="Goldsberry C."/>
            <person name="Morozov P."/>
            <person name="Fischer S.G."/>
            <person name="Segal G."/>
            <person name="Qu X."/>
            <person name="Rzhetsky A."/>
            <person name="Zhang P."/>
            <person name="Cayanis E."/>
            <person name="De Jong P.J."/>
            <person name="Ju J."/>
            <person name="Kalachikov S."/>
            <person name="Shuman H.A."/>
            <person name="Russo J.J."/>
        </authorList>
    </citation>
    <scope>NUCLEOTIDE SEQUENCE [LARGE SCALE GENOMIC DNA]</scope>
    <source>
        <strain>Philadelphia 1 / ATCC 33152 / DSM 7513</strain>
    </source>
</reference>
<reference key="2">
    <citation type="journal article" date="2011" name="PLoS ONE">
        <title>Comprehensive identification of protein substrates of the Dot/Icm type IV transporter of Legionella pneumophila.</title>
        <authorList>
            <person name="Zhu W."/>
            <person name="Banga S."/>
            <person name="Tan Y."/>
            <person name="Zheng C."/>
            <person name="Stephenson R."/>
            <person name="Gately J."/>
            <person name="Luo Z.Q."/>
        </authorList>
    </citation>
    <scope>SUBCELLULAR LOCATION</scope>
</reference>
<reference key="3">
    <citation type="journal article" date="2021" name="J. Biol. Chem.">
        <title>A Legionella effector ADP-ribosyltransferase inactivates glutamate dehydrogenase.</title>
        <authorList>
            <person name="Black M.H."/>
            <person name="Osinski A."/>
            <person name="Park G.J."/>
            <person name="Gradowski M."/>
            <person name="Servage K.A."/>
            <person name="Pawlowski K."/>
            <person name="Tagliabracci V.S."/>
        </authorList>
    </citation>
    <scope>FUNCTION</scope>
    <scope>CATALYTIC ACTIVITY</scope>
    <scope>BIOPHYSICOCHEMICAL PROPERTIES</scope>
    <scope>DISRUPTION PHENOTYPE</scope>
    <scope>MUTAGENESIS OF GLU-137</scope>
</reference>
<organism>
    <name type="scientific">Legionella pneumophila subsp. pneumophila (strain Philadelphia 1 / ATCC 33152 / DSM 7513)</name>
    <dbReference type="NCBI Taxonomy" id="272624"/>
    <lineage>
        <taxon>Bacteria</taxon>
        <taxon>Pseudomonadati</taxon>
        <taxon>Pseudomonadota</taxon>
        <taxon>Gammaproteobacteria</taxon>
        <taxon>Legionellales</taxon>
        <taxon>Legionellaceae</taxon>
        <taxon>Legionella</taxon>
    </lineage>
</organism>